<evidence type="ECO:0000255" key="1">
    <source>
        <dbReference type="HAMAP-Rule" id="MF_01013"/>
    </source>
</evidence>
<protein>
    <recommendedName>
        <fullName evidence="1">Imidazole glycerol phosphate synthase subunit HisF</fullName>
        <ecNumber evidence="1">4.3.2.10</ecNumber>
    </recommendedName>
    <alternativeName>
        <fullName evidence="1">IGP synthase cyclase subunit</fullName>
    </alternativeName>
    <alternativeName>
        <fullName evidence="1">IGP synthase subunit HisF</fullName>
    </alternativeName>
    <alternativeName>
        <fullName evidence="1">ImGP synthase subunit HisF</fullName>
        <shortName evidence="1">IGPS subunit HisF</shortName>
    </alternativeName>
</protein>
<accession>Q7UKJ9</accession>
<dbReference type="EC" id="4.3.2.10" evidence="1"/>
<dbReference type="EMBL" id="BX294150">
    <property type="protein sequence ID" value="CAD76634.1"/>
    <property type="molecule type" value="Genomic_DNA"/>
</dbReference>
<dbReference type="RefSeq" id="NP_869248.1">
    <property type="nucleotide sequence ID" value="NC_005027.1"/>
</dbReference>
<dbReference type="RefSeq" id="WP_007325161.1">
    <property type="nucleotide sequence ID" value="NC_005027.1"/>
</dbReference>
<dbReference type="SMR" id="Q7UKJ9"/>
<dbReference type="FunCoup" id="Q7UKJ9">
    <property type="interactions" value="544"/>
</dbReference>
<dbReference type="STRING" id="243090.RB10112"/>
<dbReference type="EnsemblBacteria" id="CAD76634">
    <property type="protein sequence ID" value="CAD76634"/>
    <property type="gene ID" value="RB10112"/>
</dbReference>
<dbReference type="KEGG" id="rba:RB10112"/>
<dbReference type="PATRIC" id="fig|243090.15.peg.4876"/>
<dbReference type="eggNOG" id="COG0107">
    <property type="taxonomic scope" value="Bacteria"/>
</dbReference>
<dbReference type="HOGENOM" id="CLU_048577_4_0_0"/>
<dbReference type="InParanoid" id="Q7UKJ9"/>
<dbReference type="OrthoDB" id="9781903at2"/>
<dbReference type="UniPathway" id="UPA00031">
    <property type="reaction ID" value="UER00010"/>
</dbReference>
<dbReference type="Proteomes" id="UP000001025">
    <property type="component" value="Chromosome"/>
</dbReference>
<dbReference type="GO" id="GO:0005737">
    <property type="term" value="C:cytoplasm"/>
    <property type="evidence" value="ECO:0007669"/>
    <property type="project" value="UniProtKB-SubCell"/>
</dbReference>
<dbReference type="GO" id="GO:0000107">
    <property type="term" value="F:imidazoleglycerol-phosphate synthase activity"/>
    <property type="evidence" value="ECO:0000318"/>
    <property type="project" value="GO_Central"/>
</dbReference>
<dbReference type="GO" id="GO:0016829">
    <property type="term" value="F:lyase activity"/>
    <property type="evidence" value="ECO:0007669"/>
    <property type="project" value="UniProtKB-KW"/>
</dbReference>
<dbReference type="GO" id="GO:0000105">
    <property type="term" value="P:L-histidine biosynthetic process"/>
    <property type="evidence" value="ECO:0007669"/>
    <property type="project" value="UniProtKB-UniRule"/>
</dbReference>
<dbReference type="CDD" id="cd04731">
    <property type="entry name" value="HisF"/>
    <property type="match status" value="1"/>
</dbReference>
<dbReference type="FunFam" id="3.20.20.70:FF:000006">
    <property type="entry name" value="Imidazole glycerol phosphate synthase subunit HisF"/>
    <property type="match status" value="1"/>
</dbReference>
<dbReference type="Gene3D" id="3.20.20.70">
    <property type="entry name" value="Aldolase class I"/>
    <property type="match status" value="1"/>
</dbReference>
<dbReference type="HAMAP" id="MF_01013">
    <property type="entry name" value="HisF"/>
    <property type="match status" value="1"/>
</dbReference>
<dbReference type="InterPro" id="IPR013785">
    <property type="entry name" value="Aldolase_TIM"/>
</dbReference>
<dbReference type="InterPro" id="IPR006062">
    <property type="entry name" value="His_biosynth"/>
</dbReference>
<dbReference type="InterPro" id="IPR004651">
    <property type="entry name" value="HisF"/>
</dbReference>
<dbReference type="InterPro" id="IPR050064">
    <property type="entry name" value="IGPS_HisA/HisF"/>
</dbReference>
<dbReference type="InterPro" id="IPR011060">
    <property type="entry name" value="RibuloseP-bd_barrel"/>
</dbReference>
<dbReference type="NCBIfam" id="TIGR00735">
    <property type="entry name" value="hisF"/>
    <property type="match status" value="1"/>
</dbReference>
<dbReference type="PANTHER" id="PTHR21235:SF2">
    <property type="entry name" value="IMIDAZOLE GLYCEROL PHOSPHATE SYNTHASE HISHF"/>
    <property type="match status" value="1"/>
</dbReference>
<dbReference type="PANTHER" id="PTHR21235">
    <property type="entry name" value="IMIDAZOLE GLYCEROL PHOSPHATE SYNTHASE SUBUNIT HISF/H IGP SYNTHASE SUBUNIT HISF/H"/>
    <property type="match status" value="1"/>
</dbReference>
<dbReference type="Pfam" id="PF00977">
    <property type="entry name" value="His_biosynth"/>
    <property type="match status" value="1"/>
</dbReference>
<dbReference type="SUPFAM" id="SSF51366">
    <property type="entry name" value="Ribulose-phoshate binding barrel"/>
    <property type="match status" value="1"/>
</dbReference>
<gene>
    <name evidence="1" type="primary">hisF</name>
    <name type="ordered locus">RB10112</name>
</gene>
<name>HIS6_RHOBA</name>
<organism>
    <name type="scientific">Rhodopirellula baltica (strain DSM 10527 / NCIMB 13988 / SH1)</name>
    <dbReference type="NCBI Taxonomy" id="243090"/>
    <lineage>
        <taxon>Bacteria</taxon>
        <taxon>Pseudomonadati</taxon>
        <taxon>Planctomycetota</taxon>
        <taxon>Planctomycetia</taxon>
        <taxon>Pirellulales</taxon>
        <taxon>Pirellulaceae</taxon>
        <taxon>Rhodopirellula</taxon>
    </lineage>
</organism>
<reference key="1">
    <citation type="journal article" date="2003" name="Proc. Natl. Acad. Sci. U.S.A.">
        <title>Complete genome sequence of the marine planctomycete Pirellula sp. strain 1.</title>
        <authorList>
            <person name="Gloeckner F.O."/>
            <person name="Kube M."/>
            <person name="Bauer M."/>
            <person name="Teeling H."/>
            <person name="Lombardot T."/>
            <person name="Ludwig W."/>
            <person name="Gade D."/>
            <person name="Beck A."/>
            <person name="Borzym K."/>
            <person name="Heitmann K."/>
            <person name="Rabus R."/>
            <person name="Schlesner H."/>
            <person name="Amann R."/>
            <person name="Reinhardt R."/>
        </authorList>
    </citation>
    <scope>NUCLEOTIDE SEQUENCE [LARGE SCALE GENOMIC DNA]</scope>
    <source>
        <strain>DSM 10527 / NCIMB 13988 / SH1</strain>
    </source>
</reference>
<keyword id="KW-0028">Amino-acid biosynthesis</keyword>
<keyword id="KW-0963">Cytoplasm</keyword>
<keyword id="KW-0368">Histidine biosynthesis</keyword>
<keyword id="KW-0456">Lyase</keyword>
<keyword id="KW-1185">Reference proteome</keyword>
<sequence>MLSARVIPCLDVHGGRVVKGTNFVNLRDAGDPVEVARRYEAEGADELVFLDITASHEERAILLDVVRRTAEQVFMPLTVGGGVRTVEDVRALLSAGCDKVSINSSAVTNPDFIRQAADRFGRQCIVVNIDPKRVQKDGEEFWEVHINGGRKPTGLQAVQWAKRVEELGAGEIVLTSMDADGTCDGYDIPITRAVSEAVRIPVVASGGAGNPDHLVEAIRDGKADAVLAASIFHFGTHPIGPTKQHMAEAGIRVRMPAEPFAT</sequence>
<comment type="function">
    <text evidence="1">IGPS catalyzes the conversion of PRFAR and glutamine to IGP, AICAR and glutamate. The HisF subunit catalyzes the cyclization activity that produces IGP and AICAR from PRFAR using the ammonia provided by the HisH subunit.</text>
</comment>
<comment type="catalytic activity">
    <reaction evidence="1">
        <text>5-[(5-phospho-1-deoxy-D-ribulos-1-ylimino)methylamino]-1-(5-phospho-beta-D-ribosyl)imidazole-4-carboxamide + L-glutamine = D-erythro-1-(imidazol-4-yl)glycerol 3-phosphate + 5-amino-1-(5-phospho-beta-D-ribosyl)imidazole-4-carboxamide + L-glutamate + H(+)</text>
        <dbReference type="Rhea" id="RHEA:24793"/>
        <dbReference type="ChEBI" id="CHEBI:15378"/>
        <dbReference type="ChEBI" id="CHEBI:29985"/>
        <dbReference type="ChEBI" id="CHEBI:58278"/>
        <dbReference type="ChEBI" id="CHEBI:58359"/>
        <dbReference type="ChEBI" id="CHEBI:58475"/>
        <dbReference type="ChEBI" id="CHEBI:58525"/>
        <dbReference type="EC" id="4.3.2.10"/>
    </reaction>
</comment>
<comment type="pathway">
    <text evidence="1">Amino-acid biosynthesis; L-histidine biosynthesis; L-histidine from 5-phospho-alpha-D-ribose 1-diphosphate: step 5/9.</text>
</comment>
<comment type="subunit">
    <text evidence="1">Heterodimer of HisH and HisF.</text>
</comment>
<comment type="subcellular location">
    <subcellularLocation>
        <location evidence="1">Cytoplasm</location>
    </subcellularLocation>
</comment>
<comment type="similarity">
    <text evidence="1">Belongs to the HisA/HisF family.</text>
</comment>
<feature type="chain" id="PRO_0000142220" description="Imidazole glycerol phosphate synthase subunit HisF">
    <location>
        <begin position="1"/>
        <end position="262"/>
    </location>
</feature>
<feature type="active site" evidence="1">
    <location>
        <position position="11"/>
    </location>
</feature>
<feature type="active site" evidence="1">
    <location>
        <position position="130"/>
    </location>
</feature>
<proteinExistence type="inferred from homology"/>